<accession>Q7VL96</accession>
<comment type="function">
    <text evidence="1">Plays a central role in chromosome condensation, segregation and cell cycle progression. Functions as a homodimer, which is essential for chromosome partition. Involved in negative DNA supercoiling in vivo, and by this means organize and compact chromosomes. May achieve or facilitate chromosome segregation by condensation DNA from both sides of a centrally located replisome during cell division.</text>
</comment>
<comment type="subunit">
    <text evidence="1">Homodimerization via its hinge domain. Binds to DNA via its C-terminal region. Interacts, and probably forms a ternary complex, with MukE and MukF via its C-terminal region. The complex formation is stimulated by calcium or magnesium. Interacts with tubulin-related protein FtsZ.</text>
</comment>
<comment type="subcellular location">
    <subcellularLocation>
        <location evidence="1">Cytoplasm</location>
        <location evidence="1">Nucleoid</location>
    </subcellularLocation>
    <text evidence="1">Restricted to the nucleoid region.</text>
</comment>
<comment type="domain">
    <text evidence="1">The hinge domain, which separates the large intramolecular coiled coil regions, allows the homodimerization, forming a V-shaped homodimer.</text>
</comment>
<comment type="similarity">
    <text evidence="1">Belongs to the SMC family. MukB subfamily.</text>
</comment>
<proteinExistence type="evidence at protein level"/>
<gene>
    <name evidence="1" type="primary">mukB</name>
    <name type="ordered locus">HD_1582</name>
</gene>
<organism>
    <name type="scientific">Haemophilus ducreyi (strain 35000HP / ATCC 700724)</name>
    <dbReference type="NCBI Taxonomy" id="233412"/>
    <lineage>
        <taxon>Bacteria</taxon>
        <taxon>Pseudomonadati</taxon>
        <taxon>Pseudomonadota</taxon>
        <taxon>Gammaproteobacteria</taxon>
        <taxon>Pasteurellales</taxon>
        <taxon>Pasteurellaceae</taxon>
        <taxon>Haemophilus</taxon>
    </lineage>
</organism>
<keyword id="KW-0002">3D-structure</keyword>
<keyword id="KW-0067">ATP-binding</keyword>
<keyword id="KW-0131">Cell cycle</keyword>
<keyword id="KW-0132">Cell division</keyword>
<keyword id="KW-0159">Chromosome partition</keyword>
<keyword id="KW-0175">Coiled coil</keyword>
<keyword id="KW-0963">Cytoplasm</keyword>
<keyword id="KW-0226">DNA condensation</keyword>
<keyword id="KW-0238">DNA-binding</keyword>
<keyword id="KW-0547">Nucleotide-binding</keyword>
<keyword id="KW-1185">Reference proteome</keyword>
<sequence>MMNTNELFDQTAVNSSQDKPLNPPFAVAQPANIARGKFRSLTLINWNGFFARTFDFDELVTTLSGGNGAGKSTTMAGFVTALIPDLTLLNFRNTTEAGSTSSSRDKGLYGKLKAGVCYAVLETVNSRAQRIITGVRLQQIAGRDKKVDIRPFSLQNVPMADSVISLFTEQVANKARVLSLNDLKEKFEETAVTFKPYHSITDYHSFMFDLGILPKRLRSSSDRNKFYKLIEASLYGGISSVITKSLRDYLLPENSGVRQAFQDMEAALRENRMTLEAIKVTQSDRDMFKHLITEATQYVSADYMRNANERRGNVVSALAQRRTWYDTKAKLLVEEQRLIEFSREVADINLTEQSLESEYNVANDHLNLVMNALRHQEKIIRYQDEVDALNEKLEQQQIALEEVSEQVEDAQAHTDEIDDRVDGLRSQIADYQQALDAQQTRALQYQQAITALQKAQQLCALPHLDLDNLKDYQTEFEAQAQDITDHVFELEQRLSISDMTKTQFEKAYQLVCKVSGEIDRSQAWSEATQLLATFPDQKMQAAQAVALRQKLADLEQRLHQQQKVQRLIAEFNQQAAKKLTDFTALENHFEQQQIKLEDLEAELANVIELRSVHRQQQEQLTQQYNQLAKTAPAWHTARSVLTRLEEQCAEQFENSQAIMHCMQEMLRKEREATLERDELARTEAALASQISQLSQADGAEDIRLNQLAERLGGVLLSELYDDVSLQDAPYFSALYGEARHAIVVRDLTSVKAQLEKLTDCPNDLYLIEGDPTAFDDTVFSAEELYDSVIVKVSNRQWRYSKFPEVPLFGRAAREKHLITLKTERDDIAEQHAESAFNVQKYQRLHQHLSQFVGTHLNIAFQPDPEMLMQEIALERQEIEGQLNQAVENEHYLRQQADHLKAELQMLNKILPLANTLADETVMERFEECREQLQSAEENELFVRQFGQYLTQLAPIATSLQTDPSKFEQLEHDYQQAKSTQRILQQKVFALSDVMQRRLHFNYSEENQCEGSALTEQLRTDLALAQQEREQARQRLRQAQAQFTQYNQVLISLRSAYDAKYQMLQELMQEIDDLGVRGDSAAEECARLRRDELQQQLSQQRARKGYLDKQLGIIEAEIDNLNRLLRKTERDYQTQRELVVQAKASWCLVQKLSRNSDVEKRLNRRELAYQSAEELRSISDKALGALRTAVADNEYLRDSLRASEDSRKPENKVAFFIAVYQHLRERIRQDIIRTDDPIDAIEQMEIELSRLINELTSREKKLAISAESVANILRKTIQREQNRILQLNQGLQNIAFGQVKGVRLVVNIRDTHSILLNALSDQHEQHKDLFESQKLSFSEALAMLYKRVNPHIELGQRMPQTIGEELLDYRNYLDLEVETLRGADGWMRAESSALSTGEAIGTGMSILLMVVQSWEEESRRMRAKDILPCRLLFLDEAARLDAMSINTLFELCERLDMQLLIAAPENISPEHGTTYKLVRKILANQEYVHVVGLKGFGQQMNKST</sequence>
<name>MUKB_HAEDU</name>
<evidence type="ECO:0000255" key="1">
    <source>
        <dbReference type="HAMAP-Rule" id="MF_01800"/>
    </source>
</evidence>
<evidence type="ECO:0000256" key="2">
    <source>
        <dbReference type="SAM" id="MobiDB-lite"/>
    </source>
</evidence>
<evidence type="ECO:0007829" key="3">
    <source>
        <dbReference type="PDB" id="3EUJ"/>
    </source>
</evidence>
<reference key="1">
    <citation type="submission" date="2003-06" db="EMBL/GenBank/DDBJ databases">
        <title>The complete genome sequence of Haemophilus ducreyi.</title>
        <authorList>
            <person name="Munson R.S. Jr."/>
            <person name="Ray W.C."/>
            <person name="Mahairas G."/>
            <person name="Sabo P."/>
            <person name="Mungur R."/>
            <person name="Johnson L."/>
            <person name="Nguyen D."/>
            <person name="Wang J."/>
            <person name="Forst C."/>
            <person name="Hood L."/>
        </authorList>
    </citation>
    <scope>NUCLEOTIDE SEQUENCE [LARGE SCALE GENOMIC DNA]</scope>
    <source>
        <strain>35000HP / ATCC 700724</strain>
    </source>
</reference>
<feature type="chain" id="PRO_0000068219" description="Chromosome partition protein MukB">
    <location>
        <begin position="1"/>
        <end position="1503"/>
    </location>
</feature>
<feature type="region of interest" description="Disordered" evidence="2">
    <location>
        <begin position="1"/>
        <end position="21"/>
    </location>
</feature>
<feature type="region of interest" description="Flexible hinge" evidence="1">
    <location>
        <begin position="696"/>
        <end position="813"/>
    </location>
</feature>
<feature type="coiled-coil region" evidence="1">
    <location>
        <begin position="370"/>
        <end position="495"/>
    </location>
</feature>
<feature type="coiled-coil region" evidence="1">
    <location>
        <begin position="536"/>
        <end position="616"/>
    </location>
</feature>
<feature type="coiled-coil region" evidence="1">
    <location>
        <begin position="662"/>
        <end position="697"/>
    </location>
</feature>
<feature type="coiled-coil region" evidence="1">
    <location>
        <begin position="865"/>
        <end position="1173"/>
    </location>
</feature>
<feature type="coiled-coil region" evidence="1">
    <location>
        <begin position="1238"/>
        <end position="1293"/>
    </location>
</feature>
<feature type="compositionally biased region" description="Polar residues" evidence="2">
    <location>
        <begin position="1"/>
        <end position="19"/>
    </location>
</feature>
<feature type="binding site" evidence="1">
    <location>
        <begin position="65"/>
        <end position="72"/>
    </location>
    <ligand>
        <name>ATP</name>
        <dbReference type="ChEBI" id="CHEBI:30616"/>
    </ligand>
</feature>
<feature type="strand" evidence="3">
    <location>
        <begin position="37"/>
        <end position="46"/>
    </location>
</feature>
<feature type="strand" evidence="3">
    <location>
        <begin position="49"/>
        <end position="55"/>
    </location>
</feature>
<feature type="strand" evidence="3">
    <location>
        <begin position="58"/>
        <end position="64"/>
    </location>
</feature>
<feature type="helix" evidence="3">
    <location>
        <begin position="71"/>
        <end position="82"/>
    </location>
</feature>
<feature type="turn" evidence="3">
    <location>
        <begin position="86"/>
        <end position="88"/>
    </location>
</feature>
<feature type="helix" evidence="3">
    <location>
        <begin position="109"/>
        <end position="111"/>
    </location>
</feature>
<feature type="strand" evidence="3">
    <location>
        <begin position="114"/>
        <end position="124"/>
    </location>
</feature>
<feature type="strand" evidence="3">
    <location>
        <begin position="130"/>
        <end position="139"/>
    </location>
</feature>
<feature type="strand" evidence="3">
    <location>
        <begin position="143"/>
        <end position="145"/>
    </location>
</feature>
<feature type="strand" evidence="3">
    <location>
        <begin position="151"/>
        <end position="156"/>
    </location>
</feature>
<feature type="strand" evidence="3">
    <location>
        <begin position="159"/>
        <end position="161"/>
    </location>
</feature>
<feature type="helix" evidence="3">
    <location>
        <begin position="163"/>
        <end position="167"/>
    </location>
</feature>
<feature type="strand" evidence="3">
    <location>
        <begin position="168"/>
        <end position="171"/>
    </location>
</feature>
<feature type="strand" evidence="3">
    <location>
        <begin position="174"/>
        <end position="177"/>
    </location>
</feature>
<feature type="helix" evidence="3">
    <location>
        <begin position="180"/>
        <end position="186"/>
    </location>
</feature>
<feature type="turn" evidence="3">
    <location>
        <begin position="187"/>
        <end position="189"/>
    </location>
</feature>
<feature type="helix" evidence="3">
    <location>
        <begin position="200"/>
        <end position="209"/>
    </location>
</feature>
<feature type="strand" evidence="3">
    <location>
        <begin position="213"/>
        <end position="215"/>
    </location>
</feature>
<feature type="helix" evidence="3">
    <location>
        <begin position="220"/>
        <end position="234"/>
    </location>
</feature>
<feature type="helix" evidence="3">
    <location>
        <begin position="240"/>
        <end position="244"/>
    </location>
</feature>
<feature type="helix" evidence="3">
    <location>
        <begin position="246"/>
        <end position="248"/>
    </location>
</feature>
<feature type="turn" evidence="3">
    <location>
        <begin position="255"/>
        <end position="258"/>
    </location>
</feature>
<feature type="helix" evidence="3">
    <location>
        <begin position="259"/>
        <end position="262"/>
    </location>
</feature>
<feature type="helix" evidence="3">
    <location>
        <begin position="1266"/>
        <end position="1286"/>
    </location>
</feature>
<feature type="helix" evidence="3">
    <location>
        <begin position="1287"/>
        <end position="1290"/>
    </location>
</feature>
<feature type="strand" evidence="3">
    <location>
        <begin position="1298"/>
        <end position="1307"/>
    </location>
</feature>
<feature type="helix" evidence="3">
    <location>
        <begin position="1309"/>
        <end position="1320"/>
    </location>
</feature>
<feature type="helix" evidence="3">
    <location>
        <begin position="1336"/>
        <end position="1346"/>
    </location>
</feature>
<feature type="helix" evidence="3">
    <location>
        <begin position="1363"/>
        <end position="1365"/>
    </location>
</feature>
<feature type="helix" evidence="3">
    <location>
        <begin position="1368"/>
        <end position="1370"/>
    </location>
</feature>
<feature type="strand" evidence="3">
    <location>
        <begin position="1372"/>
        <end position="1380"/>
    </location>
</feature>
<feature type="turn" evidence="3">
    <location>
        <begin position="1381"/>
        <end position="1383"/>
    </location>
</feature>
<feature type="strand" evidence="3">
    <location>
        <begin position="1384"/>
        <end position="1387"/>
    </location>
</feature>
<feature type="helix" evidence="3">
    <location>
        <begin position="1390"/>
        <end position="1392"/>
    </location>
</feature>
<feature type="helix" evidence="3">
    <location>
        <begin position="1395"/>
        <end position="1416"/>
    </location>
</feature>
<feature type="strand" evidence="3">
    <location>
        <begin position="1418"/>
        <end position="1421"/>
    </location>
</feature>
<feature type="strand" evidence="3">
    <location>
        <begin position="1430"/>
        <end position="1435"/>
    </location>
</feature>
<feature type="helix" evidence="3">
    <location>
        <begin position="1436"/>
        <end position="1438"/>
    </location>
</feature>
<feature type="helix" evidence="3">
    <location>
        <begin position="1441"/>
        <end position="1453"/>
    </location>
</feature>
<feature type="strand" evidence="3">
    <location>
        <begin position="1457"/>
        <end position="1465"/>
    </location>
</feature>
<feature type="strand" evidence="3">
    <location>
        <begin position="1469"/>
        <end position="1475"/>
    </location>
</feature>
<feature type="strand" evidence="3">
    <location>
        <begin position="1478"/>
        <end position="1481"/>
    </location>
</feature>
<feature type="strand" evidence="3">
    <location>
        <begin position="1484"/>
        <end position="1487"/>
    </location>
</feature>
<feature type="strand" evidence="3">
    <location>
        <begin position="1490"/>
        <end position="1493"/>
    </location>
</feature>
<dbReference type="EMBL" id="AE017143">
    <property type="protein sequence ID" value="AAP96363.1"/>
    <property type="molecule type" value="Genomic_DNA"/>
</dbReference>
<dbReference type="RefSeq" id="WP_010945395.1">
    <property type="nucleotide sequence ID" value="NC_002940.2"/>
</dbReference>
<dbReference type="PDB" id="3EUJ">
    <property type="method" value="X-ray"/>
    <property type="resolution" value="3.10 A"/>
    <property type="chains" value="A=33-271, A=1263-1496"/>
</dbReference>
<dbReference type="PDB" id="3EUK">
    <property type="method" value="X-ray"/>
    <property type="resolution" value="4.00 A"/>
    <property type="chains" value="A/C/F/H=33-271, A/C/F/H=1263-1496"/>
</dbReference>
<dbReference type="PDBsum" id="3EUJ"/>
<dbReference type="PDBsum" id="3EUK"/>
<dbReference type="SMR" id="Q7VL96"/>
<dbReference type="IntAct" id="Q7VL96">
    <property type="interactions" value="2"/>
</dbReference>
<dbReference type="STRING" id="233412.HD_1582"/>
<dbReference type="KEGG" id="hdu:HD_1582"/>
<dbReference type="eggNOG" id="COG3096">
    <property type="taxonomic scope" value="Bacteria"/>
</dbReference>
<dbReference type="HOGENOM" id="CLU_004430_0_0_6"/>
<dbReference type="OrthoDB" id="6722439at2"/>
<dbReference type="EvolutionaryTrace" id="Q7VL96"/>
<dbReference type="Proteomes" id="UP000001022">
    <property type="component" value="Chromosome"/>
</dbReference>
<dbReference type="GO" id="GO:0005737">
    <property type="term" value="C:cytoplasm"/>
    <property type="evidence" value="ECO:0007669"/>
    <property type="project" value="UniProtKB-UniRule"/>
</dbReference>
<dbReference type="GO" id="GO:0009295">
    <property type="term" value="C:nucleoid"/>
    <property type="evidence" value="ECO:0007669"/>
    <property type="project" value="UniProtKB-SubCell"/>
</dbReference>
<dbReference type="GO" id="GO:0005524">
    <property type="term" value="F:ATP binding"/>
    <property type="evidence" value="ECO:0007669"/>
    <property type="project" value="UniProtKB-UniRule"/>
</dbReference>
<dbReference type="GO" id="GO:0003677">
    <property type="term" value="F:DNA binding"/>
    <property type="evidence" value="ECO:0007669"/>
    <property type="project" value="UniProtKB-UniRule"/>
</dbReference>
<dbReference type="GO" id="GO:0051301">
    <property type="term" value="P:cell division"/>
    <property type="evidence" value="ECO:0007669"/>
    <property type="project" value="UniProtKB-KW"/>
</dbReference>
<dbReference type="GO" id="GO:0030261">
    <property type="term" value="P:chromosome condensation"/>
    <property type="evidence" value="ECO:0007669"/>
    <property type="project" value="UniProtKB-KW"/>
</dbReference>
<dbReference type="GO" id="GO:0007059">
    <property type="term" value="P:chromosome segregation"/>
    <property type="evidence" value="ECO:0007669"/>
    <property type="project" value="UniProtKB-UniRule"/>
</dbReference>
<dbReference type="GO" id="GO:0006260">
    <property type="term" value="P:DNA replication"/>
    <property type="evidence" value="ECO:0007669"/>
    <property type="project" value="UniProtKB-UniRule"/>
</dbReference>
<dbReference type="Gene3D" id="1.20.58.850">
    <property type="match status" value="1"/>
</dbReference>
<dbReference type="Gene3D" id="3.40.1140.10">
    <property type="match status" value="2"/>
</dbReference>
<dbReference type="Gene3D" id="1.20.5.420">
    <property type="entry name" value="Immunoglobulin FC, subunit C"/>
    <property type="match status" value="1"/>
</dbReference>
<dbReference type="Gene3D" id="3.30.70.3500">
    <property type="entry name" value="MukB, hinge domain"/>
    <property type="match status" value="1"/>
</dbReference>
<dbReference type="HAMAP" id="MF_01800">
    <property type="entry name" value="MukB"/>
    <property type="match status" value="1"/>
</dbReference>
<dbReference type="InterPro" id="IPR012090">
    <property type="entry name" value="MukB"/>
</dbReference>
<dbReference type="InterPro" id="IPR050308">
    <property type="entry name" value="MukB/SMC"/>
</dbReference>
<dbReference type="InterPro" id="IPR032520">
    <property type="entry name" value="MukB_hinge"/>
</dbReference>
<dbReference type="InterPro" id="IPR042501">
    <property type="entry name" value="MukB_hinge_sf"/>
</dbReference>
<dbReference type="InterPro" id="IPR007406">
    <property type="entry name" value="MukB_N_dom"/>
</dbReference>
<dbReference type="InterPro" id="IPR027417">
    <property type="entry name" value="P-loop_NTPase"/>
</dbReference>
<dbReference type="NCBIfam" id="NF003422">
    <property type="entry name" value="PRK04863.1"/>
    <property type="match status" value="1"/>
</dbReference>
<dbReference type="PANTHER" id="PTHR42963">
    <property type="entry name" value="CHROMOSOME PARTITION PROTEIN MUKB"/>
    <property type="match status" value="1"/>
</dbReference>
<dbReference type="PANTHER" id="PTHR42963:SF1">
    <property type="entry name" value="DUF4476 DOMAIN-CONTAINING PROTEIN"/>
    <property type="match status" value="1"/>
</dbReference>
<dbReference type="Pfam" id="PF04310">
    <property type="entry name" value="MukB"/>
    <property type="match status" value="1"/>
</dbReference>
<dbReference type="Pfam" id="PF16330">
    <property type="entry name" value="MukB_hinge"/>
    <property type="match status" value="1"/>
</dbReference>
<dbReference type="Pfam" id="PF13558">
    <property type="entry name" value="SbcC_Walker_B"/>
    <property type="match status" value="1"/>
</dbReference>
<dbReference type="PIRSF" id="PIRSF005246">
    <property type="entry name" value="MukB"/>
    <property type="match status" value="1"/>
</dbReference>
<dbReference type="SUPFAM" id="SSF52540">
    <property type="entry name" value="P-loop containing nucleoside triphosphate hydrolases"/>
    <property type="match status" value="1"/>
</dbReference>
<protein>
    <recommendedName>
        <fullName evidence="1">Chromosome partition protein MukB</fullName>
    </recommendedName>
    <alternativeName>
        <fullName evidence="1">Structural maintenance of chromosome-related protein</fullName>
    </alternativeName>
</protein>